<comment type="function">
    <text evidence="1">Catalyzes the initial step of the lipid cycle reactions in the biosynthesis of the cell wall peptidoglycan: transfers peptidoglycan precursor phospho-MurNAc-pentapeptide from UDP-MurNAc-pentapeptide onto the lipid carrier undecaprenyl phosphate, yielding undecaprenyl-pyrophosphoryl-MurNAc-pentapeptide, known as lipid I.</text>
</comment>
<comment type="catalytic activity">
    <reaction evidence="1">
        <text>UDP-N-acetyl-alpha-D-muramoyl-L-alanyl-gamma-D-glutamyl-L-lysyl-D-alanyl-D-alanine + di-trans,octa-cis-undecaprenyl phosphate = Mur2Ac(oyl-L-Ala-gamma-D-Glu-L-Lys-D-Ala-D-Ala)-di-trans,octa-cis-undecaprenyl diphosphate + UMP</text>
        <dbReference type="Rhea" id="RHEA:21920"/>
        <dbReference type="ChEBI" id="CHEBI:57865"/>
        <dbReference type="ChEBI" id="CHEBI:60032"/>
        <dbReference type="ChEBI" id="CHEBI:60392"/>
        <dbReference type="ChEBI" id="CHEBI:70758"/>
        <dbReference type="EC" id="2.7.8.13"/>
    </reaction>
</comment>
<comment type="cofactor">
    <cofactor evidence="1">
        <name>Mg(2+)</name>
        <dbReference type="ChEBI" id="CHEBI:18420"/>
    </cofactor>
</comment>
<comment type="pathway">
    <text evidence="1">Cell wall biogenesis; peptidoglycan biosynthesis.</text>
</comment>
<comment type="subcellular location">
    <subcellularLocation>
        <location evidence="1">Cell membrane</location>
        <topology evidence="1">Multi-pass membrane protein</topology>
    </subcellularLocation>
</comment>
<comment type="similarity">
    <text evidence="1">Belongs to the glycosyltransferase 4 family. MraY subfamily.</text>
</comment>
<accession>B9DPR2</accession>
<feature type="chain" id="PRO_1000117196" description="Phospho-N-acetylmuramoyl-pentapeptide-transferase">
    <location>
        <begin position="1"/>
        <end position="321"/>
    </location>
</feature>
<feature type="transmembrane region" description="Helical" evidence="1">
    <location>
        <begin position="1"/>
        <end position="21"/>
    </location>
</feature>
<feature type="transmembrane region" description="Helical" evidence="1">
    <location>
        <begin position="49"/>
        <end position="69"/>
    </location>
</feature>
<feature type="transmembrane region" description="Helical" evidence="1">
    <location>
        <begin position="77"/>
        <end position="97"/>
    </location>
</feature>
<feature type="transmembrane region" description="Helical" evidence="1">
    <location>
        <begin position="112"/>
        <end position="132"/>
    </location>
</feature>
<feature type="transmembrane region" description="Helical" evidence="1">
    <location>
        <begin position="140"/>
        <end position="160"/>
    </location>
</feature>
<feature type="transmembrane region" description="Helical" evidence="1">
    <location>
        <begin position="176"/>
        <end position="196"/>
    </location>
</feature>
<feature type="transmembrane region" description="Helical" evidence="1">
    <location>
        <begin position="200"/>
        <end position="220"/>
    </location>
</feature>
<feature type="transmembrane region" description="Helical" evidence="1">
    <location>
        <begin position="225"/>
        <end position="245"/>
    </location>
</feature>
<feature type="transmembrane region" description="Helical" evidence="1">
    <location>
        <begin position="250"/>
        <end position="270"/>
    </location>
</feature>
<feature type="transmembrane region" description="Helical" evidence="1">
    <location>
        <begin position="300"/>
        <end position="320"/>
    </location>
</feature>
<dbReference type="EC" id="2.7.8.13" evidence="1"/>
<dbReference type="EMBL" id="AM295250">
    <property type="protein sequence ID" value="CAL27705.1"/>
    <property type="molecule type" value="Genomic_DNA"/>
</dbReference>
<dbReference type="RefSeq" id="WP_015900047.1">
    <property type="nucleotide sequence ID" value="NC_012121.1"/>
</dbReference>
<dbReference type="SMR" id="B9DPR2"/>
<dbReference type="GeneID" id="93795731"/>
<dbReference type="KEGG" id="sca:SCA_0795"/>
<dbReference type="eggNOG" id="COG0472">
    <property type="taxonomic scope" value="Bacteria"/>
</dbReference>
<dbReference type="HOGENOM" id="CLU_023982_0_1_9"/>
<dbReference type="OrthoDB" id="9805475at2"/>
<dbReference type="BioCyc" id="SCAR396513:SCA_RS04030-MONOMER"/>
<dbReference type="UniPathway" id="UPA00219"/>
<dbReference type="Proteomes" id="UP000000444">
    <property type="component" value="Chromosome"/>
</dbReference>
<dbReference type="GO" id="GO:0005886">
    <property type="term" value="C:plasma membrane"/>
    <property type="evidence" value="ECO:0007669"/>
    <property type="project" value="UniProtKB-SubCell"/>
</dbReference>
<dbReference type="GO" id="GO:0046872">
    <property type="term" value="F:metal ion binding"/>
    <property type="evidence" value="ECO:0007669"/>
    <property type="project" value="UniProtKB-KW"/>
</dbReference>
<dbReference type="GO" id="GO:0008963">
    <property type="term" value="F:phospho-N-acetylmuramoyl-pentapeptide-transferase activity"/>
    <property type="evidence" value="ECO:0007669"/>
    <property type="project" value="UniProtKB-UniRule"/>
</dbReference>
<dbReference type="GO" id="GO:0051301">
    <property type="term" value="P:cell division"/>
    <property type="evidence" value="ECO:0007669"/>
    <property type="project" value="UniProtKB-KW"/>
</dbReference>
<dbReference type="GO" id="GO:0071555">
    <property type="term" value="P:cell wall organization"/>
    <property type="evidence" value="ECO:0007669"/>
    <property type="project" value="UniProtKB-KW"/>
</dbReference>
<dbReference type="GO" id="GO:0009252">
    <property type="term" value="P:peptidoglycan biosynthetic process"/>
    <property type="evidence" value="ECO:0007669"/>
    <property type="project" value="UniProtKB-UniRule"/>
</dbReference>
<dbReference type="GO" id="GO:0008360">
    <property type="term" value="P:regulation of cell shape"/>
    <property type="evidence" value="ECO:0007669"/>
    <property type="project" value="UniProtKB-KW"/>
</dbReference>
<dbReference type="CDD" id="cd06852">
    <property type="entry name" value="GT_MraY"/>
    <property type="match status" value="1"/>
</dbReference>
<dbReference type="HAMAP" id="MF_00038">
    <property type="entry name" value="MraY"/>
    <property type="match status" value="1"/>
</dbReference>
<dbReference type="InterPro" id="IPR000715">
    <property type="entry name" value="Glycosyl_transferase_4"/>
</dbReference>
<dbReference type="InterPro" id="IPR003524">
    <property type="entry name" value="PNAcMuramoyl-5peptid_Trfase"/>
</dbReference>
<dbReference type="InterPro" id="IPR018480">
    <property type="entry name" value="PNAcMuramoyl-5peptid_Trfase_CS"/>
</dbReference>
<dbReference type="NCBIfam" id="TIGR00445">
    <property type="entry name" value="mraY"/>
    <property type="match status" value="1"/>
</dbReference>
<dbReference type="PANTHER" id="PTHR22926">
    <property type="entry name" value="PHOSPHO-N-ACETYLMURAMOYL-PENTAPEPTIDE-TRANSFERASE"/>
    <property type="match status" value="1"/>
</dbReference>
<dbReference type="PANTHER" id="PTHR22926:SF5">
    <property type="entry name" value="PHOSPHO-N-ACETYLMURAMOYL-PENTAPEPTIDE-TRANSFERASE HOMOLOG"/>
    <property type="match status" value="1"/>
</dbReference>
<dbReference type="Pfam" id="PF00953">
    <property type="entry name" value="Glycos_transf_4"/>
    <property type="match status" value="1"/>
</dbReference>
<dbReference type="PROSITE" id="PS01347">
    <property type="entry name" value="MRAY_1"/>
    <property type="match status" value="1"/>
</dbReference>
<dbReference type="PROSITE" id="PS01348">
    <property type="entry name" value="MRAY_2"/>
    <property type="match status" value="1"/>
</dbReference>
<name>MRAY_STACT</name>
<keyword id="KW-0131">Cell cycle</keyword>
<keyword id="KW-0132">Cell division</keyword>
<keyword id="KW-1003">Cell membrane</keyword>
<keyword id="KW-0133">Cell shape</keyword>
<keyword id="KW-0961">Cell wall biogenesis/degradation</keyword>
<keyword id="KW-0460">Magnesium</keyword>
<keyword id="KW-0472">Membrane</keyword>
<keyword id="KW-0479">Metal-binding</keyword>
<keyword id="KW-0573">Peptidoglycan synthesis</keyword>
<keyword id="KW-1185">Reference proteome</keyword>
<keyword id="KW-0808">Transferase</keyword>
<keyword id="KW-0812">Transmembrane</keyword>
<keyword id="KW-1133">Transmembrane helix</keyword>
<evidence type="ECO:0000255" key="1">
    <source>
        <dbReference type="HAMAP-Rule" id="MF_00038"/>
    </source>
</evidence>
<sequence>MIYVLAIIAFLITLILVPILIPTLKRMKFGQSIREEGPQSHMKKTGTPTMGGLTFLISIIITTIIAIIFSDNANPYILLLFVTVGFGLIGFVDDYIIVVKKNNQGLTSKQKFLAQIAIAVIFFILSDVFNMIHFATGIHIPFTNVSIPLSVVYVVFIVFWQVGFSNAVNLTDGLDGLATGLSIIAFAMYAIMSFMLGNNAVGTFCIIMVFALLGFLIYNVNPAKVFMGDTGSLALGGIIATVSIMLNAEISLIFIGFVFVAETLSVILQVASFKLTGKRIFKMSPLHHHFELSGWNEWKVVSVFWIVGLITGLIGLWIGVH</sequence>
<protein>
    <recommendedName>
        <fullName evidence="1">Phospho-N-acetylmuramoyl-pentapeptide-transferase</fullName>
        <ecNumber evidence="1">2.7.8.13</ecNumber>
    </recommendedName>
    <alternativeName>
        <fullName evidence="1">UDP-MurNAc-pentapeptide phosphotransferase</fullName>
    </alternativeName>
</protein>
<gene>
    <name evidence="1" type="primary">mraY</name>
    <name type="ordered locus">Sca_0795</name>
</gene>
<reference key="1">
    <citation type="journal article" date="2009" name="Appl. Environ. Microbiol.">
        <title>Genome analysis of the meat starter culture bacterium Staphylococcus carnosus TM300.</title>
        <authorList>
            <person name="Rosenstein R."/>
            <person name="Nerz C."/>
            <person name="Biswas L."/>
            <person name="Resch A."/>
            <person name="Raddatz G."/>
            <person name="Schuster S.C."/>
            <person name="Goetz F."/>
        </authorList>
    </citation>
    <scope>NUCLEOTIDE SEQUENCE [LARGE SCALE GENOMIC DNA]</scope>
    <source>
        <strain>TM300</strain>
    </source>
</reference>
<organism>
    <name type="scientific">Staphylococcus carnosus (strain TM300)</name>
    <dbReference type="NCBI Taxonomy" id="396513"/>
    <lineage>
        <taxon>Bacteria</taxon>
        <taxon>Bacillati</taxon>
        <taxon>Bacillota</taxon>
        <taxon>Bacilli</taxon>
        <taxon>Bacillales</taxon>
        <taxon>Staphylococcaceae</taxon>
        <taxon>Staphylococcus</taxon>
    </lineage>
</organism>
<proteinExistence type="inferred from homology"/>